<organismHost>
    <name type="scientific">Connochaetes taurinus</name>
    <name type="common">Blue wildebeest</name>
    <dbReference type="NCBI Taxonomy" id="9927"/>
</organismHost>
<gene>
    <name type="primary">52</name>
</gene>
<keyword id="KW-0175">Coiled coil</keyword>
<keyword id="KW-1185">Reference proteome</keyword>
<feature type="chain" id="PRO_0000405722" description="Uncharacterized gene 52 protein">
    <location>
        <begin position="1"/>
        <end position="125"/>
    </location>
</feature>
<feature type="region of interest" description="Disordered" evidence="2">
    <location>
        <begin position="22"/>
        <end position="50"/>
    </location>
</feature>
<feature type="region of interest" description="Disordered" evidence="2">
    <location>
        <begin position="96"/>
        <end position="125"/>
    </location>
</feature>
<feature type="coiled-coil region" evidence="1">
    <location>
        <begin position="5"/>
        <end position="33"/>
    </location>
</feature>
<feature type="compositionally biased region" description="Basic and acidic residues" evidence="2">
    <location>
        <begin position="39"/>
        <end position="50"/>
    </location>
</feature>
<feature type="compositionally biased region" description="Basic and acidic residues" evidence="2">
    <location>
        <begin position="96"/>
        <end position="112"/>
    </location>
</feature>
<feature type="compositionally biased region" description="Basic residues" evidence="2">
    <location>
        <begin position="113"/>
        <end position="125"/>
    </location>
</feature>
<accession>O36402</accession>
<evidence type="ECO:0000255" key="1"/>
<evidence type="ECO:0000256" key="2">
    <source>
        <dbReference type="SAM" id="MobiDB-lite"/>
    </source>
</evidence>
<evidence type="ECO:0000305" key="3"/>
<comment type="similarity">
    <text evidence="3">Belongs to the herpesviridae BLRF2 family.</text>
</comment>
<organism>
    <name type="scientific">Alcelaphine herpesvirus 1 (strain C500)</name>
    <name type="common">AlHV-1</name>
    <name type="synonym">Malignant catarrhal fever virus</name>
    <dbReference type="NCBI Taxonomy" id="654901"/>
    <lineage>
        <taxon>Viruses</taxon>
        <taxon>Duplodnaviria</taxon>
        <taxon>Heunggongvirae</taxon>
        <taxon>Peploviricota</taxon>
        <taxon>Herviviricetes</taxon>
        <taxon>Herpesvirales</taxon>
        <taxon>Orthoherpesviridae</taxon>
        <taxon>Gammaherpesvirinae</taxon>
        <taxon>Macavirus</taxon>
        <taxon>Macavirus alcelaphinegamma1</taxon>
    </lineage>
</organism>
<protein>
    <recommendedName>
        <fullName>Uncharacterized gene 52 protein</fullName>
    </recommendedName>
</protein>
<name>VG52_ALHV1</name>
<reference key="1">
    <citation type="journal article" date="1997" name="J. Virol.">
        <title>Primary structure of the alcelaphine herpesvirus 1 genome.</title>
        <authorList>
            <person name="Ensser A."/>
            <person name="Pflanz R."/>
            <person name="Fleckenstein B."/>
        </authorList>
    </citation>
    <scope>NUCLEOTIDE SEQUENCE [LARGE SCALE GENOMIC DNA]</scope>
</reference>
<sequence>MDPKNLTVEQLAAELTKLQMENSHLKRKLRRSVGGPPKEPPKPRELTEPERQLVLARWHNRFSSRSSELLRRQLDKLTATLVTEEDIDEVLKNADFRLHFRPDPSENPEKKLSKEKRRTARGQQQ</sequence>
<dbReference type="EMBL" id="AF005370">
    <property type="protein sequence ID" value="AAC58099.1"/>
    <property type="molecule type" value="Genomic_DNA"/>
</dbReference>
<dbReference type="PIR" id="T03147">
    <property type="entry name" value="T03147"/>
</dbReference>
<dbReference type="RefSeq" id="NP_065551.1">
    <property type="nucleotide sequence ID" value="NC_002531.1"/>
</dbReference>
<dbReference type="SMR" id="O36402"/>
<dbReference type="KEGG" id="vg:911769"/>
<dbReference type="Proteomes" id="UP000000941">
    <property type="component" value="Segment"/>
</dbReference>
<dbReference type="Gene3D" id="1.10.3390.10">
    <property type="entry name" value="YejL-like"/>
    <property type="match status" value="1"/>
</dbReference>
<dbReference type="InterPro" id="IPR008642">
    <property type="entry name" value="Herpes_BLRF2"/>
</dbReference>
<dbReference type="Pfam" id="PF05812">
    <property type="entry name" value="Herpes_BLRF2"/>
    <property type="match status" value="1"/>
</dbReference>
<dbReference type="SUPFAM" id="SSF160459">
    <property type="entry name" value="BLRF2-like"/>
    <property type="match status" value="1"/>
</dbReference>
<proteinExistence type="inferred from homology"/>